<protein>
    <recommendedName>
        <fullName>mRNA endoribonuclease toxin LS</fullName>
        <ecNumber>3.1.-.-</ecNumber>
    </recommendedName>
    <alternativeName>
        <fullName evidence="8">RNase LS</fullName>
    </alternativeName>
    <alternativeName>
        <fullName>Toxin LS</fullName>
    </alternativeName>
</protein>
<dbReference type="EC" id="3.1.-.-"/>
<dbReference type="EMBL" id="U36840">
    <property type="protein sequence ID" value="AAA79799.1"/>
    <property type="molecule type" value="Genomic_DNA"/>
</dbReference>
<dbReference type="EMBL" id="U00096">
    <property type="protein sequence ID" value="AAC75678.1"/>
    <property type="molecule type" value="Genomic_DNA"/>
</dbReference>
<dbReference type="EMBL" id="AP009048">
    <property type="protein sequence ID" value="BAE76765.1"/>
    <property type="molecule type" value="Genomic_DNA"/>
</dbReference>
<dbReference type="PIR" id="H65041">
    <property type="entry name" value="H65041"/>
</dbReference>
<dbReference type="RefSeq" id="NP_417119.1">
    <property type="nucleotide sequence ID" value="NC_000913.3"/>
</dbReference>
<dbReference type="RefSeq" id="WP_000155570.1">
    <property type="nucleotide sequence ID" value="NZ_LN832404.1"/>
</dbReference>
<dbReference type="PDB" id="4I8O">
    <property type="method" value="X-ray"/>
    <property type="resolution" value="2.10 A"/>
    <property type="chains" value="A/B=1-357"/>
</dbReference>
<dbReference type="PDB" id="6Y2P">
    <property type="method" value="X-ray"/>
    <property type="resolution" value="2.64 A"/>
    <property type="chains" value="A/B=1-357"/>
</dbReference>
<dbReference type="PDB" id="6Y2Q">
    <property type="method" value="X-ray"/>
    <property type="resolution" value="2.99 A"/>
    <property type="chains" value="A/B=1-357"/>
</dbReference>
<dbReference type="PDB" id="6Y2R">
    <property type="method" value="X-ray"/>
    <property type="resolution" value="3.89 A"/>
    <property type="chains" value="A/B=2-357"/>
</dbReference>
<dbReference type="PDB" id="6Y2S">
    <property type="method" value="X-ray"/>
    <property type="resolution" value="3.79 A"/>
    <property type="chains" value="A/B=2-357"/>
</dbReference>
<dbReference type="PDB" id="7AEX">
    <property type="method" value="X-ray"/>
    <property type="resolution" value="1.95 A"/>
    <property type="chains" value="A=92-357"/>
</dbReference>
<dbReference type="PDBsum" id="4I8O"/>
<dbReference type="PDBsum" id="6Y2P"/>
<dbReference type="PDBsum" id="6Y2Q"/>
<dbReference type="PDBsum" id="6Y2R"/>
<dbReference type="PDBsum" id="6Y2S"/>
<dbReference type="PDBsum" id="7AEX"/>
<dbReference type="SASBDB" id="P52129"/>
<dbReference type="SMR" id="P52129"/>
<dbReference type="BioGRID" id="4259437">
    <property type="interactions" value="34"/>
</dbReference>
<dbReference type="ComplexPortal" id="CPX-4115">
    <property type="entry name" value="RnlAB toxin-antitoxin complex"/>
</dbReference>
<dbReference type="DIP" id="DIP-12079N"/>
<dbReference type="FunCoup" id="P52129">
    <property type="interactions" value="7"/>
</dbReference>
<dbReference type="IntAct" id="P52129">
    <property type="interactions" value="3"/>
</dbReference>
<dbReference type="STRING" id="511145.b2630"/>
<dbReference type="jPOST" id="P52129"/>
<dbReference type="PaxDb" id="511145-b2630"/>
<dbReference type="EnsemblBacteria" id="AAC75678">
    <property type="protein sequence ID" value="AAC75678"/>
    <property type="gene ID" value="b2630"/>
</dbReference>
<dbReference type="GeneID" id="947107"/>
<dbReference type="KEGG" id="ecj:JW2611"/>
<dbReference type="KEGG" id="eco:b2630"/>
<dbReference type="KEGG" id="ecoc:C3026_14550"/>
<dbReference type="PATRIC" id="fig|1411691.4.peg.4109"/>
<dbReference type="EchoBASE" id="EB2992"/>
<dbReference type="eggNOG" id="ENOG502ZABA">
    <property type="taxonomic scope" value="Bacteria"/>
</dbReference>
<dbReference type="HOGENOM" id="CLU_065781_0_0_6"/>
<dbReference type="InParanoid" id="P52129"/>
<dbReference type="OMA" id="CYRAFIF"/>
<dbReference type="OrthoDB" id="6398311at2"/>
<dbReference type="BioCyc" id="EcoCyc:G7365-MONOMER"/>
<dbReference type="BioCyc" id="MetaCyc:G7365-MONOMER"/>
<dbReference type="EvolutionaryTrace" id="P52129"/>
<dbReference type="PRO" id="PR:P52129"/>
<dbReference type="Proteomes" id="UP000000625">
    <property type="component" value="Chromosome"/>
</dbReference>
<dbReference type="GO" id="GO:0005737">
    <property type="term" value="C:cytoplasm"/>
    <property type="evidence" value="ECO:0007669"/>
    <property type="project" value="UniProtKB-SubCell"/>
</dbReference>
<dbReference type="GO" id="GO:0110001">
    <property type="term" value="C:toxin-antitoxin complex"/>
    <property type="evidence" value="ECO:0000353"/>
    <property type="project" value="ComplexPortal"/>
</dbReference>
<dbReference type="GO" id="GO:0042803">
    <property type="term" value="F:protein homodimerization activity"/>
    <property type="evidence" value="ECO:0000314"/>
    <property type="project" value="EcoCyc"/>
</dbReference>
<dbReference type="GO" id="GO:0004521">
    <property type="term" value="F:RNA endonuclease activity"/>
    <property type="evidence" value="ECO:0000314"/>
    <property type="project" value="EcoCyc"/>
</dbReference>
<dbReference type="GO" id="GO:0051607">
    <property type="term" value="P:defense response to virus"/>
    <property type="evidence" value="ECO:0007669"/>
    <property type="project" value="UniProtKB-KW"/>
</dbReference>
<dbReference type="GO" id="GO:0006402">
    <property type="term" value="P:mRNA catabolic process"/>
    <property type="evidence" value="ECO:0000315"/>
    <property type="project" value="EcoCyc"/>
</dbReference>
<dbReference type="GO" id="GO:0006355">
    <property type="term" value="P:regulation of DNA-templated transcription"/>
    <property type="evidence" value="ECO:0000303"/>
    <property type="project" value="ComplexPortal"/>
</dbReference>
<dbReference type="GO" id="GO:0040008">
    <property type="term" value="P:regulation of growth"/>
    <property type="evidence" value="ECO:0000303"/>
    <property type="project" value="ComplexPortal"/>
</dbReference>
<dbReference type="GO" id="GO:0044010">
    <property type="term" value="P:single-species biofilm formation"/>
    <property type="evidence" value="ECO:0000303"/>
    <property type="project" value="ComplexPortal"/>
</dbReference>
<dbReference type="CDD" id="cd14794">
    <property type="entry name" value="RNLA_N_1"/>
    <property type="match status" value="1"/>
</dbReference>
<dbReference type="CDD" id="cd14795">
    <property type="entry name" value="RNLA_N_2"/>
    <property type="match status" value="1"/>
</dbReference>
<dbReference type="Gene3D" id="6.10.250.2650">
    <property type="match status" value="1"/>
</dbReference>
<dbReference type="Gene3D" id="1.10.8.1130">
    <property type="entry name" value="Bacterial toxin RNase RnlA/LsoA, C-terminal Dmd-binding domain"/>
    <property type="match status" value="1"/>
</dbReference>
<dbReference type="Gene3D" id="3.30.160.690">
    <property type="entry name" value="Bacterial toxin RNase RnlA/LsoA, N repeated domain"/>
    <property type="match status" value="1"/>
</dbReference>
<dbReference type="Gene3D" id="3.30.310.240">
    <property type="entry name" value="Bacterial toxin RNase RnlA/LsoA, N-terminal domain"/>
    <property type="match status" value="1"/>
</dbReference>
<dbReference type="InterPro" id="IPR043994">
    <property type="entry name" value="RnlA/LsoA-toxin_DBD"/>
</dbReference>
<dbReference type="InterPro" id="IPR045837">
    <property type="entry name" value="RnlA_toxin_N"/>
</dbReference>
<dbReference type="InterPro" id="IPR031845">
    <property type="entry name" value="RnlA_toxin_NRD"/>
</dbReference>
<dbReference type="Pfam" id="PF19034">
    <property type="entry name" value="RnlA-toxin_DBD"/>
    <property type="match status" value="1"/>
</dbReference>
<dbReference type="Pfam" id="PF15935">
    <property type="entry name" value="RnlA_toxin"/>
    <property type="match status" value="1"/>
</dbReference>
<dbReference type="Pfam" id="PF19417">
    <property type="entry name" value="RnlA_toxin_N"/>
    <property type="match status" value="1"/>
</dbReference>
<gene>
    <name type="primary">rnlA</name>
    <name type="synonym">std</name>
    <name type="synonym">yfjN</name>
    <name type="ordered locus">b2630</name>
    <name type="ordered locus">JW2611</name>
</gene>
<evidence type="ECO:0000269" key="1">
    <source>
    </source>
</evidence>
<evidence type="ECO:0000269" key="2">
    <source>
    </source>
</evidence>
<evidence type="ECO:0000269" key="3">
    <source>
    </source>
</evidence>
<evidence type="ECO:0000269" key="4">
    <source>
    </source>
</evidence>
<evidence type="ECO:0000269" key="5">
    <source>
    </source>
</evidence>
<evidence type="ECO:0000269" key="6">
    <source>
    </source>
</evidence>
<evidence type="ECO:0000269" key="7">
    <source>
    </source>
</evidence>
<evidence type="ECO:0000303" key="8">
    <source>
    </source>
</evidence>
<evidence type="ECO:0000305" key="9">
    <source>
    </source>
</evidence>
<evidence type="ECO:0007829" key="10">
    <source>
        <dbReference type="PDB" id="4I8O"/>
    </source>
</evidence>
<evidence type="ECO:0007829" key="11">
    <source>
        <dbReference type="PDB" id="6Y2P"/>
    </source>
</evidence>
<evidence type="ECO:0007829" key="12">
    <source>
        <dbReference type="PDB" id="7AEX"/>
    </source>
</evidence>
<accession>P52129</accession>
<accession>P76604</accession>
<accession>Q2MAE1</accession>
<reference key="1">
    <citation type="journal article" date="1997" name="Science">
        <title>The complete genome sequence of Escherichia coli K-12.</title>
        <authorList>
            <person name="Blattner F.R."/>
            <person name="Plunkett G. III"/>
            <person name="Bloch C.A."/>
            <person name="Perna N.T."/>
            <person name="Burland V."/>
            <person name="Riley M."/>
            <person name="Collado-Vides J."/>
            <person name="Glasner J.D."/>
            <person name="Rode C.K."/>
            <person name="Mayhew G.F."/>
            <person name="Gregor J."/>
            <person name="Davis N.W."/>
            <person name="Kirkpatrick H.A."/>
            <person name="Goeden M.A."/>
            <person name="Rose D.J."/>
            <person name="Mau B."/>
            <person name="Shao Y."/>
        </authorList>
    </citation>
    <scope>NUCLEOTIDE SEQUENCE [LARGE SCALE GENOMIC DNA]</scope>
    <source>
        <strain>K12 / MG1655 / ATCC 47076</strain>
    </source>
</reference>
<reference key="2">
    <citation type="journal article" date="2006" name="Mol. Syst. Biol.">
        <title>Highly accurate genome sequences of Escherichia coli K-12 strains MG1655 and W3110.</title>
        <authorList>
            <person name="Hayashi K."/>
            <person name="Morooka N."/>
            <person name="Yamamoto Y."/>
            <person name="Fujita K."/>
            <person name="Isono K."/>
            <person name="Choi S."/>
            <person name="Ohtsubo E."/>
            <person name="Baba T."/>
            <person name="Wanner B.L."/>
            <person name="Mori H."/>
            <person name="Horiuchi T."/>
        </authorList>
    </citation>
    <scope>NUCLEOTIDE SEQUENCE [LARGE SCALE GENOMIC DNA]</scope>
    <source>
        <strain>K12 / W3110 / ATCC 27325 / DSM 5911</strain>
    </source>
</reference>
<reference key="3">
    <citation type="journal article" date="2005" name="Genetics">
        <title>A novel endoribonuclease, RNase LS, in Escherichia coli.</title>
        <authorList>
            <person name="Otsuka Y."/>
            <person name="Yonesaki T."/>
        </authorList>
    </citation>
    <scope>IDENTIFICATION</scope>
    <scope>DISRUPTION PHENOTYPE</scope>
    <scope>MUTAGENESIS OF 188-GLU--ASP-196</scope>
    <source>
        <strain>K12</strain>
    </source>
</reference>
<reference key="4">
    <citation type="journal article" date="2007" name="Genes Genet. Syst.">
        <title>A role of RnlA in the RNase LS activity from Escherichia coli.</title>
        <authorList>
            <person name="Otsuka Y."/>
            <person name="Koga M."/>
            <person name="Iwamoto A."/>
            <person name="Yonesaki T."/>
        </authorList>
    </citation>
    <scope>FUNCTION AS AN ENDORIBONUCLEASE</scope>
    <scope>SUBCELLULAR LOCATION</scope>
    <source>
        <strain>K12</strain>
    </source>
</reference>
<reference key="5">
    <citation type="journal article" date="2008" name="Mol. Microbiol.">
        <title>Post-transcriptional control of Crp-cAMP by RNase LS in Escherichia coli.</title>
        <authorList>
            <person name="Iwamoto A."/>
            <person name="Lemire S."/>
            <person name="Yonesaki T."/>
        </authorList>
    </citation>
    <scope>FUNCTION</scope>
    <scope>DISRUPTION PHENOTYPE</scope>
    <source>
        <strain>K12</strain>
    </source>
</reference>
<reference key="6">
    <citation type="journal article" date="2010" name="Genetics">
        <title>IscR regulates RNase LS activity by repressing rnlA transcription.</title>
        <authorList>
            <person name="Otsuka Y."/>
            <person name="Miki K."/>
            <person name="Koga M."/>
            <person name="Katayama N."/>
            <person name="Morimoto W."/>
            <person name="Takahashi Y."/>
            <person name="Yonesaki T."/>
        </authorList>
    </citation>
    <scope>INDUCTION</scope>
    <source>
        <strain>K12</strain>
    </source>
</reference>
<reference key="7">
    <citation type="journal article" date="2011" name="Genetics">
        <title>Escherichia coli rnlA and rnlB compose a novel toxin-antitoxin system.</title>
        <authorList>
            <person name="Koga M."/>
            <person name="Otsuka Y."/>
            <person name="Lemire S."/>
            <person name="Yonesaki T."/>
        </authorList>
    </citation>
    <scope>FUNCTION AS A TOXIN</scope>
    <scope>FUNCTION AS A MRNA ENDORIBONUCLEASE</scope>
    <scope>INTERACTION WITH RNLB</scope>
    <source>
        <strain>K12</strain>
    </source>
</reference>
<reference key="8">
    <citation type="journal article" date="2012" name="Mol. Microbiol.">
        <title>Dmd of bacteriophage T4 functions as an antitoxin against Escherichia coli LsoA and RnlA toxins.</title>
        <authorList>
            <person name="Otsuka Y."/>
            <person name="Yonesaki T."/>
        </authorList>
    </citation>
    <scope>FUNCTION AS A TOXIN</scope>
    <scope>FUNCTION AS AN MRNA ENDORIBONUCLEASE</scope>
    <scope>INTERACTION WITH ENTEROBACTERIA PHAGE T4 ANTITOXIN DMD</scope>
    <source>
        <strain>K12 / W3110 / ATCC 27325 / DSM 5911</strain>
    </source>
</reference>
<reference key="9">
    <citation type="journal article" date="2013" name="Mol. Microbiol.">
        <title>Structure-function studies of Escherichia coli RnlA reveal a novel toxin structure involved in bacteriophage resistance.</title>
        <authorList>
            <person name="Wei Y."/>
            <person name="Gao Z.Q."/>
            <person name="Otsuka Y."/>
            <person name="Naka K."/>
            <person name="Yonesaki T."/>
            <person name="Zhang H."/>
            <person name="Dong Y.H."/>
        </authorList>
    </citation>
    <scope>X-RAY CRYSTALLOGRAPHY (2.10 ANGSTROMS)</scope>
    <scope>FUNCTION</scope>
    <scope>SUBUNIT</scope>
    <scope>DOMAIN</scope>
    <scope>MUTAGENESIS OF 327-VAL--VAL-357</scope>
    <source>
        <strain>K12</strain>
    </source>
</reference>
<proteinExistence type="evidence at protein level"/>
<sequence>MTIRSYKNLNLVRANIETESRQFIENKNYSIQSIGPMPGSRAGLRVVFTRPGVNLATVDIFYNGDGSTTIQYLTGANRSLGQELADHLFETINPAEFEQVNMVLQGFVETSVLPVLELSADESHIEFREHSRNAHTVVWKIISTSYQDELTVSLHITTGKLQIQGRPLSCYRVFTFNLAALLDLQGLEKVLIRQEDGKANIVQQEVARTYLQTVMADAYPHLHVTAEKLLVSGLCVKLAAPDLPDYCMLLYPELRTIEGVLKSKMSGLGMPVQQPAGFGTYFDKPAAHYILKPQFAATLRPEQINIISTAYTFFNVERHSLFHMETVVDASRMISDMARLMGKATRAWGIIKDLYIV</sequence>
<feature type="chain" id="PRO_0000169279" description="mRNA endoribonuclease toxin LS">
    <location>
        <begin position="1"/>
        <end position="357"/>
    </location>
</feature>
<feature type="mutagenesis site" description="In rnlA5; strongly reduces RNase LS activity." evidence="1">
    <original>EKVLIRQED</original>
    <variation>KKVLIRQEN</variation>
    <location>
        <begin position="188"/>
        <end position="196"/>
    </location>
</feature>
<feature type="mutagenesis site" description="No longer interacts with T4 phage antitoxin Dmd." evidence="7">
    <location>
        <begin position="327"/>
        <end position="357"/>
    </location>
</feature>
<feature type="strand" evidence="10">
    <location>
        <begin position="7"/>
        <end position="9"/>
    </location>
</feature>
<feature type="helix" evidence="10">
    <location>
        <begin position="13"/>
        <end position="15"/>
    </location>
</feature>
<feature type="helix" evidence="10">
    <location>
        <begin position="16"/>
        <end position="26"/>
    </location>
</feature>
<feature type="strand" evidence="10">
    <location>
        <begin position="30"/>
        <end position="35"/>
    </location>
</feature>
<feature type="strand" evidence="11">
    <location>
        <begin position="38"/>
        <end position="41"/>
    </location>
</feature>
<feature type="strand" evidence="10">
    <location>
        <begin position="43"/>
        <end position="49"/>
    </location>
</feature>
<feature type="strand" evidence="10">
    <location>
        <begin position="56"/>
        <end position="62"/>
    </location>
</feature>
<feature type="strand" evidence="10">
    <location>
        <begin position="68"/>
        <end position="71"/>
    </location>
</feature>
<feature type="strand" evidence="10">
    <location>
        <begin position="73"/>
        <end position="76"/>
    </location>
</feature>
<feature type="helix" evidence="10">
    <location>
        <begin position="78"/>
        <end position="90"/>
    </location>
</feature>
<feature type="helix" evidence="12">
    <location>
        <begin position="94"/>
        <end position="97"/>
    </location>
</feature>
<feature type="strand" evidence="12">
    <location>
        <begin position="100"/>
        <end position="106"/>
    </location>
</feature>
<feature type="helix" evidence="12">
    <location>
        <begin position="109"/>
        <end position="120"/>
    </location>
</feature>
<feature type="strand" evidence="12">
    <location>
        <begin position="125"/>
        <end position="132"/>
    </location>
</feature>
<feature type="strand" evidence="12">
    <location>
        <begin position="134"/>
        <end position="143"/>
    </location>
</feature>
<feature type="turn" evidence="12">
    <location>
        <begin position="144"/>
        <end position="147"/>
    </location>
</feature>
<feature type="strand" evidence="12">
    <location>
        <begin position="148"/>
        <end position="155"/>
    </location>
</feature>
<feature type="turn" evidence="12">
    <location>
        <begin position="156"/>
        <end position="159"/>
    </location>
</feature>
<feature type="strand" evidence="12">
    <location>
        <begin position="160"/>
        <end position="165"/>
    </location>
</feature>
<feature type="helix" evidence="12">
    <location>
        <begin position="169"/>
        <end position="178"/>
    </location>
</feature>
<feature type="helix" evidence="12">
    <location>
        <begin position="179"/>
        <end position="181"/>
    </location>
</feature>
<feature type="helix" evidence="12">
    <location>
        <begin position="184"/>
        <end position="192"/>
    </location>
</feature>
<feature type="helix" evidence="12">
    <location>
        <begin position="199"/>
        <end position="201"/>
    </location>
</feature>
<feature type="helix" evidence="12">
    <location>
        <begin position="204"/>
        <end position="215"/>
    </location>
</feature>
<feature type="helix" evidence="12">
    <location>
        <begin position="216"/>
        <end position="221"/>
    </location>
</feature>
<feature type="helix" evidence="12">
    <location>
        <begin position="224"/>
        <end position="238"/>
    </location>
</feature>
<feature type="helix" evidence="12">
    <location>
        <begin position="247"/>
        <end position="250"/>
    </location>
</feature>
<feature type="helix" evidence="12">
    <location>
        <begin position="251"/>
        <end position="267"/>
    </location>
</feature>
<feature type="turn" evidence="12">
    <location>
        <begin position="274"/>
        <end position="276"/>
    </location>
</feature>
<feature type="helix" evidence="12">
    <location>
        <begin position="277"/>
        <end position="281"/>
    </location>
</feature>
<feature type="strand" evidence="10">
    <location>
        <begin position="286"/>
        <end position="288"/>
    </location>
</feature>
<feature type="helix" evidence="12">
    <location>
        <begin position="293"/>
        <end position="296"/>
    </location>
</feature>
<feature type="helix" evidence="12">
    <location>
        <begin position="301"/>
        <end position="322"/>
    </location>
</feature>
<feature type="helix" evidence="12">
    <location>
        <begin position="325"/>
        <end position="328"/>
    </location>
</feature>
<feature type="helix" evidence="12">
    <location>
        <begin position="330"/>
        <end position="332"/>
    </location>
</feature>
<feature type="helix" evidence="12">
    <location>
        <begin position="337"/>
        <end position="355"/>
    </location>
</feature>
<name>RNLA_ECOLI</name>
<keyword id="KW-0002">3D-structure</keyword>
<keyword id="KW-0051">Antiviral defense</keyword>
<keyword id="KW-0963">Cytoplasm</keyword>
<keyword id="KW-0255">Endonuclease</keyword>
<keyword id="KW-0378">Hydrolase</keyword>
<keyword id="KW-0540">Nuclease</keyword>
<keyword id="KW-1185">Reference proteome</keyword>
<keyword id="KW-1277">Toxin-antitoxin system</keyword>
<organism>
    <name type="scientific">Escherichia coli (strain K12)</name>
    <dbReference type="NCBI Taxonomy" id="83333"/>
    <lineage>
        <taxon>Bacteria</taxon>
        <taxon>Pseudomonadati</taxon>
        <taxon>Pseudomonadota</taxon>
        <taxon>Gammaproteobacteria</taxon>
        <taxon>Enterobacterales</taxon>
        <taxon>Enterobacteriaceae</taxon>
        <taxon>Escherichia</taxon>
    </lineage>
</organism>
<comment type="function">
    <text evidence="2 3 5 6 7">Toxic component of a type II toxin-antitoxin (TA) system (PubMed:20980243, PubMed:24112600). A stable (half-life 27.6 minutes) endoribonuclease that in the absence of cognate antitoxin RnlB causes generalized RNA degradation. Degrades late enterobacteria phage T4 mRNAs, protecting the host against T4 reproduction. Activity is inhibited by cognate antitoxin RnlB and by enterobacteria phage T4 protein Dmd (PubMed:20980243, PubMed:22403819). Targets cyaA mRNA (PubMed:19019153).</text>
</comment>
<comment type="subunit">
    <text evidence="5 6">Forms homodimer in solution (PubMed:24112600). Forms a complex with cognate antitoxin RnlB (PubMed:20980243) and with enterobacteria phage T4 antitoxin Dmd (PubMed:22403819).</text>
</comment>
<comment type="interaction">
    <interactant intactId="EBI-560462">
        <id>P52129</id>
    </interactant>
    <interactant intactId="EBI-21183386">
        <id>P52130</id>
        <label>rnlB</label>
    </interactant>
    <organismsDiffer>false</organismsDiffer>
    <experiments>2</experiments>
</comment>
<comment type="subcellular location">
    <subcellularLocation>
        <location evidence="2">Cytoplasm</location>
    </subcellularLocation>
    <text evidence="9">May associate with ribosomes, it sediments in a P100 fraction (pellet of a 100,000 x g centrifugation).</text>
</comment>
<comment type="induction">
    <text evidence="4">Repressed by IscR. rnlA-rnlB forms an operon, the downstream rnlB also has its own promoter.</text>
</comment>
<comment type="domain">
    <text evidence="7">Composed of 3 domains, the NTD (N-terminal domain, residues 1-90), NRD (N-repeated domain, residues 91-197) and DBD (Dmd-binding domain, residues 198-357). The DBD is responsible for dimerization, growth inhibition upon overexpression and recognition of T4 antitoxin Dmd (via residues 327-357) and antitoxin RnlB and subcellular location (PubMed:24112600).</text>
</comment>
<comment type="disruption phenotype">
    <text evidence="1 3">Not essential, slightly smaller colonies on minimal agar plates at 30 degrees Celsius. Strongly reduces RNase LS activity, restores growth of an enterobacteria phage T4 dmd mutant. Altered mRNA half-life for some cellular transcripts, including an increased half-life for an internal fragment of 23S rRNA. Allele rnlA2 is due to a premature stop codon at residue 33 (PubMed:15677746). Sensitive to high concentrations of NaCl, sensitivity is eliminated in a crp or cyaA deletion mutant. Increased levels of Crp and thus increased levels of cAMP.</text>
</comment>